<keyword id="KW-0068">Autocatalytic cleavage</keyword>
<keyword id="KW-0963">Cytoplasm</keyword>
<keyword id="KW-0210">Decarboxylase</keyword>
<keyword id="KW-0456">Lyase</keyword>
<keyword id="KW-0566">Pantothenate biosynthesis</keyword>
<keyword id="KW-0670">Pyruvate</keyword>
<keyword id="KW-0704">Schiff base</keyword>
<keyword id="KW-0865">Zymogen</keyword>
<evidence type="ECO:0000255" key="1">
    <source>
        <dbReference type="HAMAP-Rule" id="MF_00446"/>
    </source>
</evidence>
<sequence>MQRIMLRAKLHRVTVTQADLNYEGSCGIDQDLLDAADMKEFEKIELYNVNNGERFSTYIIKGERGSGEISLNGAAARRAHLGDQLIICTYAPMTDEEIATYKPKVILVNEKNGIKEIKKV</sequence>
<accession>B3R6Q3</accession>
<protein>
    <recommendedName>
        <fullName evidence="1">Aspartate 1-decarboxylase</fullName>
        <ecNumber evidence="1">4.1.1.11</ecNumber>
    </recommendedName>
    <alternativeName>
        <fullName evidence="1">Aspartate alpha-decarboxylase</fullName>
    </alternativeName>
    <component>
        <recommendedName>
            <fullName evidence="1">Aspartate 1-decarboxylase beta chain</fullName>
        </recommendedName>
    </component>
    <component>
        <recommendedName>
            <fullName evidence="1">Aspartate 1-decarboxylase alpha chain</fullName>
        </recommendedName>
    </component>
</protein>
<feature type="chain" id="PRO_1000191968" description="Aspartate 1-decarboxylase beta chain" evidence="1">
    <location>
        <begin position="1"/>
        <end position="24"/>
    </location>
</feature>
<feature type="chain" id="PRO_1000191969" description="Aspartate 1-decarboxylase alpha chain" evidence="1">
    <location>
        <begin position="25"/>
        <end position="120"/>
    </location>
</feature>
<feature type="active site" description="Schiff-base intermediate with substrate; via pyruvic acid" evidence="1">
    <location>
        <position position="25"/>
    </location>
</feature>
<feature type="active site" description="Proton donor" evidence="1">
    <location>
        <position position="58"/>
    </location>
</feature>
<feature type="binding site" evidence="1">
    <location>
        <position position="57"/>
    </location>
    <ligand>
        <name>substrate</name>
    </ligand>
</feature>
<feature type="binding site" evidence="1">
    <location>
        <begin position="73"/>
        <end position="75"/>
    </location>
    <ligand>
        <name>substrate</name>
    </ligand>
</feature>
<feature type="modified residue" description="Pyruvic acid (Ser)" evidence="1">
    <location>
        <position position="25"/>
    </location>
</feature>
<proteinExistence type="inferred from homology"/>
<dbReference type="EC" id="4.1.1.11" evidence="1"/>
<dbReference type="EMBL" id="CU633749">
    <property type="protein sequence ID" value="CAQ70536.1"/>
    <property type="molecule type" value="Genomic_DNA"/>
</dbReference>
<dbReference type="RefSeq" id="WP_012353832.1">
    <property type="nucleotide sequence ID" value="NC_010528.1"/>
</dbReference>
<dbReference type="SMR" id="B3R6Q3"/>
<dbReference type="GeneID" id="29762283"/>
<dbReference type="KEGG" id="cti:RALTA_A2605"/>
<dbReference type="eggNOG" id="COG0853">
    <property type="taxonomic scope" value="Bacteria"/>
</dbReference>
<dbReference type="HOGENOM" id="CLU_115305_2_1_4"/>
<dbReference type="BioCyc" id="CTAI977880:RALTA_RS12670-MONOMER"/>
<dbReference type="UniPathway" id="UPA00028">
    <property type="reaction ID" value="UER00002"/>
</dbReference>
<dbReference type="Proteomes" id="UP000001692">
    <property type="component" value="Chromosome 1"/>
</dbReference>
<dbReference type="GO" id="GO:0005829">
    <property type="term" value="C:cytosol"/>
    <property type="evidence" value="ECO:0007669"/>
    <property type="project" value="TreeGrafter"/>
</dbReference>
<dbReference type="GO" id="GO:0004068">
    <property type="term" value="F:aspartate 1-decarboxylase activity"/>
    <property type="evidence" value="ECO:0007669"/>
    <property type="project" value="UniProtKB-UniRule"/>
</dbReference>
<dbReference type="GO" id="GO:0006523">
    <property type="term" value="P:alanine biosynthetic process"/>
    <property type="evidence" value="ECO:0007669"/>
    <property type="project" value="InterPro"/>
</dbReference>
<dbReference type="GO" id="GO:0015940">
    <property type="term" value="P:pantothenate biosynthetic process"/>
    <property type="evidence" value="ECO:0007669"/>
    <property type="project" value="UniProtKB-UniRule"/>
</dbReference>
<dbReference type="CDD" id="cd06919">
    <property type="entry name" value="Asp_decarbox"/>
    <property type="match status" value="1"/>
</dbReference>
<dbReference type="Gene3D" id="2.40.40.20">
    <property type="match status" value="1"/>
</dbReference>
<dbReference type="HAMAP" id="MF_00446">
    <property type="entry name" value="PanD"/>
    <property type="match status" value="1"/>
</dbReference>
<dbReference type="InterPro" id="IPR009010">
    <property type="entry name" value="Asp_de-COase-like_dom_sf"/>
</dbReference>
<dbReference type="InterPro" id="IPR003190">
    <property type="entry name" value="Asp_decarbox"/>
</dbReference>
<dbReference type="NCBIfam" id="TIGR00223">
    <property type="entry name" value="panD"/>
    <property type="match status" value="1"/>
</dbReference>
<dbReference type="PANTHER" id="PTHR21012">
    <property type="entry name" value="ASPARTATE 1-DECARBOXYLASE"/>
    <property type="match status" value="1"/>
</dbReference>
<dbReference type="PANTHER" id="PTHR21012:SF0">
    <property type="entry name" value="ASPARTATE 1-DECARBOXYLASE"/>
    <property type="match status" value="1"/>
</dbReference>
<dbReference type="Pfam" id="PF02261">
    <property type="entry name" value="Asp_decarbox"/>
    <property type="match status" value="1"/>
</dbReference>
<dbReference type="PIRSF" id="PIRSF006246">
    <property type="entry name" value="Asp_decarbox"/>
    <property type="match status" value="1"/>
</dbReference>
<dbReference type="SUPFAM" id="SSF50692">
    <property type="entry name" value="ADC-like"/>
    <property type="match status" value="1"/>
</dbReference>
<comment type="function">
    <text evidence="1">Catalyzes the pyruvoyl-dependent decarboxylation of aspartate to produce beta-alanine.</text>
</comment>
<comment type="catalytic activity">
    <reaction evidence="1">
        <text>L-aspartate + H(+) = beta-alanine + CO2</text>
        <dbReference type="Rhea" id="RHEA:19497"/>
        <dbReference type="ChEBI" id="CHEBI:15378"/>
        <dbReference type="ChEBI" id="CHEBI:16526"/>
        <dbReference type="ChEBI" id="CHEBI:29991"/>
        <dbReference type="ChEBI" id="CHEBI:57966"/>
        <dbReference type="EC" id="4.1.1.11"/>
    </reaction>
</comment>
<comment type="cofactor">
    <cofactor evidence="1">
        <name>pyruvate</name>
        <dbReference type="ChEBI" id="CHEBI:15361"/>
    </cofactor>
    <text evidence="1">Binds 1 pyruvoyl group covalently per subunit.</text>
</comment>
<comment type="pathway">
    <text evidence="1">Cofactor biosynthesis; (R)-pantothenate biosynthesis; beta-alanine from L-aspartate: step 1/1.</text>
</comment>
<comment type="subunit">
    <text evidence="1">Heterooctamer of four alpha and four beta subunits.</text>
</comment>
<comment type="subcellular location">
    <subcellularLocation>
        <location evidence="1">Cytoplasm</location>
    </subcellularLocation>
</comment>
<comment type="PTM">
    <text evidence="1">Is synthesized initially as an inactive proenzyme, which is activated by self-cleavage at a specific serine bond to produce a beta-subunit with a hydroxyl group at its C-terminus and an alpha-subunit with a pyruvoyl group at its N-terminus.</text>
</comment>
<comment type="similarity">
    <text evidence="1">Belongs to the PanD family.</text>
</comment>
<reference key="1">
    <citation type="journal article" date="2008" name="Genome Res.">
        <title>Genome sequence of the beta-rhizobium Cupriavidus taiwanensis and comparative genomics of rhizobia.</title>
        <authorList>
            <person name="Amadou C."/>
            <person name="Pascal G."/>
            <person name="Mangenot S."/>
            <person name="Glew M."/>
            <person name="Bontemps C."/>
            <person name="Capela D."/>
            <person name="Carrere S."/>
            <person name="Cruveiller S."/>
            <person name="Dossat C."/>
            <person name="Lajus A."/>
            <person name="Marchetti M."/>
            <person name="Poinsot V."/>
            <person name="Rouy Z."/>
            <person name="Servin B."/>
            <person name="Saad M."/>
            <person name="Schenowitz C."/>
            <person name="Barbe V."/>
            <person name="Batut J."/>
            <person name="Medigue C."/>
            <person name="Masson-Boivin C."/>
        </authorList>
    </citation>
    <scope>NUCLEOTIDE SEQUENCE [LARGE SCALE GENOMIC DNA]</scope>
    <source>
        <strain>DSM 17343 / BCRC 17206 / CCUG 44338 / CIP 107171 / LMG 19424 / R1</strain>
    </source>
</reference>
<organism>
    <name type="scientific">Cupriavidus taiwanensis (strain DSM 17343 / BCRC 17206 / CCUG 44338 / CIP 107171 / LMG 19424 / R1)</name>
    <name type="common">Ralstonia taiwanensis (strain LMG 19424)</name>
    <dbReference type="NCBI Taxonomy" id="977880"/>
    <lineage>
        <taxon>Bacteria</taxon>
        <taxon>Pseudomonadati</taxon>
        <taxon>Pseudomonadota</taxon>
        <taxon>Betaproteobacteria</taxon>
        <taxon>Burkholderiales</taxon>
        <taxon>Burkholderiaceae</taxon>
        <taxon>Cupriavidus</taxon>
    </lineage>
</organism>
<name>PAND_CUPTR</name>
<gene>
    <name evidence="1" type="primary">panD</name>
    <name type="ordered locus">RALTA_A2605</name>
</gene>